<reference key="1">
    <citation type="journal article" date="2000" name="Nature">
        <title>Sequence and analysis of chromosome 1 of the plant Arabidopsis thaliana.</title>
        <authorList>
            <person name="Theologis A."/>
            <person name="Ecker J.R."/>
            <person name="Palm C.J."/>
            <person name="Federspiel N.A."/>
            <person name="Kaul S."/>
            <person name="White O."/>
            <person name="Alonso J."/>
            <person name="Altafi H."/>
            <person name="Araujo R."/>
            <person name="Bowman C.L."/>
            <person name="Brooks S.Y."/>
            <person name="Buehler E."/>
            <person name="Chan A."/>
            <person name="Chao Q."/>
            <person name="Chen H."/>
            <person name="Cheuk R.F."/>
            <person name="Chin C.W."/>
            <person name="Chung M.K."/>
            <person name="Conn L."/>
            <person name="Conway A.B."/>
            <person name="Conway A.R."/>
            <person name="Creasy T.H."/>
            <person name="Dewar K."/>
            <person name="Dunn P."/>
            <person name="Etgu P."/>
            <person name="Feldblyum T.V."/>
            <person name="Feng J.-D."/>
            <person name="Fong B."/>
            <person name="Fujii C.Y."/>
            <person name="Gill J.E."/>
            <person name="Goldsmith A.D."/>
            <person name="Haas B."/>
            <person name="Hansen N.F."/>
            <person name="Hughes B."/>
            <person name="Huizar L."/>
            <person name="Hunter J.L."/>
            <person name="Jenkins J."/>
            <person name="Johnson-Hopson C."/>
            <person name="Khan S."/>
            <person name="Khaykin E."/>
            <person name="Kim C.J."/>
            <person name="Koo H.L."/>
            <person name="Kremenetskaia I."/>
            <person name="Kurtz D.B."/>
            <person name="Kwan A."/>
            <person name="Lam B."/>
            <person name="Langin-Hooper S."/>
            <person name="Lee A."/>
            <person name="Lee J.M."/>
            <person name="Lenz C.A."/>
            <person name="Li J.H."/>
            <person name="Li Y.-P."/>
            <person name="Lin X."/>
            <person name="Liu S.X."/>
            <person name="Liu Z.A."/>
            <person name="Luros J.S."/>
            <person name="Maiti R."/>
            <person name="Marziali A."/>
            <person name="Militscher J."/>
            <person name="Miranda M."/>
            <person name="Nguyen M."/>
            <person name="Nierman W.C."/>
            <person name="Osborne B.I."/>
            <person name="Pai G."/>
            <person name="Peterson J."/>
            <person name="Pham P.K."/>
            <person name="Rizzo M."/>
            <person name="Rooney T."/>
            <person name="Rowley D."/>
            <person name="Sakano H."/>
            <person name="Salzberg S.L."/>
            <person name="Schwartz J.R."/>
            <person name="Shinn P."/>
            <person name="Southwick A.M."/>
            <person name="Sun H."/>
            <person name="Tallon L.J."/>
            <person name="Tambunga G."/>
            <person name="Toriumi M.J."/>
            <person name="Town C.D."/>
            <person name="Utterback T."/>
            <person name="Van Aken S."/>
            <person name="Vaysberg M."/>
            <person name="Vysotskaia V.S."/>
            <person name="Walker M."/>
            <person name="Wu D."/>
            <person name="Yu G."/>
            <person name="Fraser C.M."/>
            <person name="Venter J.C."/>
            <person name="Davis R.W."/>
        </authorList>
    </citation>
    <scope>NUCLEOTIDE SEQUENCE [LARGE SCALE GENOMIC DNA]</scope>
    <source>
        <strain>cv. Columbia</strain>
    </source>
</reference>
<reference key="2">
    <citation type="journal article" date="2017" name="Plant J.">
        <title>Araport11: a complete reannotation of the Arabidopsis thaliana reference genome.</title>
        <authorList>
            <person name="Cheng C.Y."/>
            <person name="Krishnakumar V."/>
            <person name="Chan A.P."/>
            <person name="Thibaud-Nissen F."/>
            <person name="Schobel S."/>
            <person name="Town C.D."/>
        </authorList>
    </citation>
    <scope>GENOME REANNOTATION</scope>
    <source>
        <strain>cv. Columbia</strain>
    </source>
</reference>
<reference key="3">
    <citation type="submission" date="2006-05" db="EMBL/GenBank/DDBJ databases">
        <title>Arabidopsis ORF clones.</title>
        <authorList>
            <person name="Quinitio C."/>
            <person name="Chen H."/>
            <person name="Kim C.J."/>
            <person name="Shinn P."/>
            <person name="Ecker J.R."/>
        </authorList>
    </citation>
    <scope>NUCLEOTIDE SEQUENCE [LARGE SCALE MRNA]</scope>
    <source>
        <strain>cv. Columbia</strain>
    </source>
</reference>
<reference key="4">
    <citation type="journal article" date="2006" name="Plant Physiol.">
        <title>Identification and characterization of the Arabidopsis orthologs of nuclear transport factor 2, the nuclear import factor of ran.</title>
        <authorList>
            <person name="Zhao Q."/>
            <person name="Leung S."/>
            <person name="Corbett A.H."/>
            <person name="Meier I."/>
        </authorList>
    </citation>
    <scope>FUNCTION</scope>
    <scope>TISSUE SPECIFICITY</scope>
    <scope>INTERACTION WITH RAN1</scope>
    <scope>SUBCELLULAR LOCATION</scope>
    <scope>GENE FAMILY</scope>
    <scope>NOMENCLATURE</scope>
    <source>
        <strain>cv. Columbia</strain>
    </source>
</reference>
<reference key="5">
    <citation type="journal article" date="2012" name="Mol. Cell. Proteomics">
        <title>Comparative large-scale characterisation of plant vs. mammal proteins reveals similar and idiosyncratic N-alpha acetylation features.</title>
        <authorList>
            <person name="Bienvenut W.V."/>
            <person name="Sumpton D."/>
            <person name="Martinez A."/>
            <person name="Lilla S."/>
            <person name="Espagne C."/>
            <person name="Meinnel T."/>
            <person name="Giglione C."/>
        </authorList>
    </citation>
    <scope>ACETYLATION [LARGE SCALE ANALYSIS] AT SER-2</scope>
    <scope>CLEAVAGE OF INITIATOR METHIONINE [LARGE SCALE ANALYSIS]</scope>
    <scope>IDENTIFICATION BY MASS SPECTROMETRY [LARGE SCALE ANALYSIS]</scope>
</reference>
<organism>
    <name type="scientific">Arabidopsis thaliana</name>
    <name type="common">Mouse-ear cress</name>
    <dbReference type="NCBI Taxonomy" id="3702"/>
    <lineage>
        <taxon>Eukaryota</taxon>
        <taxon>Viridiplantae</taxon>
        <taxon>Streptophyta</taxon>
        <taxon>Embryophyta</taxon>
        <taxon>Tracheophyta</taxon>
        <taxon>Spermatophyta</taxon>
        <taxon>Magnoliopsida</taxon>
        <taxon>eudicotyledons</taxon>
        <taxon>Gunneridae</taxon>
        <taxon>Pentapetalae</taxon>
        <taxon>rosids</taxon>
        <taxon>malvids</taxon>
        <taxon>Brassicales</taxon>
        <taxon>Brassicaceae</taxon>
        <taxon>Camelineae</taxon>
        <taxon>Arabidopsis</taxon>
    </lineage>
</organism>
<dbReference type="EMBL" id="AC069471">
    <property type="protein sequence ID" value="AAG51491.1"/>
    <property type="molecule type" value="Genomic_DNA"/>
</dbReference>
<dbReference type="EMBL" id="CP002684">
    <property type="protein sequence ID" value="AEE30896.1"/>
    <property type="molecule type" value="Genomic_DNA"/>
</dbReference>
<dbReference type="EMBL" id="BT025598">
    <property type="protein sequence ID" value="ABF59016.1"/>
    <property type="molecule type" value="mRNA"/>
</dbReference>
<dbReference type="PIR" id="B86405">
    <property type="entry name" value="B86405"/>
</dbReference>
<dbReference type="RefSeq" id="NP_174118.1">
    <molecule id="Q9C7F5-1"/>
    <property type="nucleotide sequence ID" value="NM_102562.4"/>
</dbReference>
<dbReference type="SMR" id="Q9C7F5"/>
<dbReference type="BioGRID" id="24925">
    <property type="interactions" value="5"/>
</dbReference>
<dbReference type="FunCoup" id="Q9C7F5">
    <property type="interactions" value="4484"/>
</dbReference>
<dbReference type="STRING" id="3702.Q9C7F5"/>
<dbReference type="iPTMnet" id="Q9C7F5"/>
<dbReference type="PaxDb" id="3702-AT1G27970.2"/>
<dbReference type="ProteomicsDB" id="248938">
    <molecule id="Q9C7F5-1"/>
</dbReference>
<dbReference type="EnsemblPlants" id="AT1G27970.1">
    <molecule id="Q9C7F5-1"/>
    <property type="protein sequence ID" value="AT1G27970.1"/>
    <property type="gene ID" value="AT1G27970"/>
</dbReference>
<dbReference type="GeneID" id="839690"/>
<dbReference type="Gramene" id="AT1G27970.1">
    <molecule id="Q9C7F5-1"/>
    <property type="protein sequence ID" value="AT1G27970.1"/>
    <property type="gene ID" value="AT1G27970"/>
</dbReference>
<dbReference type="KEGG" id="ath:AT1G27970"/>
<dbReference type="Araport" id="AT1G27970"/>
<dbReference type="TAIR" id="AT1G27970">
    <property type="gene designation" value="NTF2B"/>
</dbReference>
<dbReference type="eggNOG" id="KOG2104">
    <property type="taxonomic scope" value="Eukaryota"/>
</dbReference>
<dbReference type="HOGENOM" id="CLU_131642_0_0_1"/>
<dbReference type="InParanoid" id="Q9C7F5"/>
<dbReference type="OMA" id="QFVEYYY"/>
<dbReference type="OrthoDB" id="6507044at2759"/>
<dbReference type="PhylomeDB" id="Q9C7F5"/>
<dbReference type="PRO" id="PR:Q9C7F5"/>
<dbReference type="Proteomes" id="UP000006548">
    <property type="component" value="Chromosome 1"/>
</dbReference>
<dbReference type="ExpressionAtlas" id="Q9C7F5">
    <property type="expression patterns" value="baseline and differential"/>
</dbReference>
<dbReference type="GO" id="GO:0005737">
    <property type="term" value="C:cytoplasm"/>
    <property type="evidence" value="ECO:0000314"/>
    <property type="project" value="UniProtKB"/>
</dbReference>
<dbReference type="GO" id="GO:0005635">
    <property type="term" value="C:nuclear envelope"/>
    <property type="evidence" value="ECO:0000314"/>
    <property type="project" value="UniProtKB"/>
</dbReference>
<dbReference type="GO" id="GO:0005634">
    <property type="term" value="C:nucleus"/>
    <property type="evidence" value="ECO:0000314"/>
    <property type="project" value="UniProtKB"/>
</dbReference>
<dbReference type="GO" id="GO:0006606">
    <property type="term" value="P:protein import into nucleus"/>
    <property type="evidence" value="ECO:0000314"/>
    <property type="project" value="UniProtKB"/>
</dbReference>
<dbReference type="CDD" id="cd00780">
    <property type="entry name" value="NTF2"/>
    <property type="match status" value="1"/>
</dbReference>
<dbReference type="FunFam" id="3.10.450.50:FF:000005">
    <property type="entry name" value="Nuclear transport factor 2"/>
    <property type="match status" value="1"/>
</dbReference>
<dbReference type="Gene3D" id="3.10.450.50">
    <property type="match status" value="1"/>
</dbReference>
<dbReference type="InterPro" id="IPR045875">
    <property type="entry name" value="NTF2"/>
</dbReference>
<dbReference type="InterPro" id="IPR032710">
    <property type="entry name" value="NTF2-like_dom_sf"/>
</dbReference>
<dbReference type="InterPro" id="IPR002075">
    <property type="entry name" value="NTF2_dom"/>
</dbReference>
<dbReference type="InterPro" id="IPR018222">
    <property type="entry name" value="Nuclear_transport_factor_2_euk"/>
</dbReference>
<dbReference type="PANTHER" id="PTHR12612">
    <property type="entry name" value="NUCLEAR TRANSPORT FACTOR 2"/>
    <property type="match status" value="1"/>
</dbReference>
<dbReference type="Pfam" id="PF02136">
    <property type="entry name" value="NTF2"/>
    <property type="match status" value="1"/>
</dbReference>
<dbReference type="SUPFAM" id="SSF54427">
    <property type="entry name" value="NTF2-like"/>
    <property type="match status" value="1"/>
</dbReference>
<dbReference type="PROSITE" id="PS50177">
    <property type="entry name" value="NTF2_DOMAIN"/>
    <property type="match status" value="1"/>
</dbReference>
<accession>Q9C7F5</accession>
<accession>Q1H566</accession>
<sequence>MSQMDPDAVSKAFVEHYYSTFDTNRVGLAGLYQEASMLTFEGQKIQGVQSIVAKLTSLPFQQCKHHISTVDCQPSGPASGMLVFVSGNLQLAGEEHALKFSQMFHLMPTPQGSFYVFNDIFRLNYA</sequence>
<name>NTF2B_ARATH</name>
<gene>
    <name evidence="3" type="primary">NTF2B</name>
    <name evidence="4" type="ordered locus">At1g27970</name>
    <name evidence="5" type="ORF">F13K9.26</name>
</gene>
<proteinExistence type="evidence at protein level"/>
<keyword id="KW-0007">Acetylation</keyword>
<keyword id="KW-0025">Alternative splicing</keyword>
<keyword id="KW-0963">Cytoplasm</keyword>
<keyword id="KW-0539">Nucleus</keyword>
<keyword id="KW-0653">Protein transport</keyword>
<keyword id="KW-1185">Reference proteome</keyword>
<keyword id="KW-0813">Transport</keyword>
<protein>
    <recommendedName>
        <fullName evidence="3">Nuclear transport factor 2B</fullName>
        <shortName evidence="3">AtNTF2b</shortName>
        <shortName>NTF-2</shortName>
    </recommendedName>
</protein>
<evidence type="ECO:0000255" key="1">
    <source>
        <dbReference type="PROSITE-ProRule" id="PRU00137"/>
    </source>
</evidence>
<evidence type="ECO:0000269" key="2">
    <source>
    </source>
</evidence>
<evidence type="ECO:0000303" key="3">
    <source>
    </source>
</evidence>
<evidence type="ECO:0000312" key="4">
    <source>
        <dbReference type="Araport" id="AT1G27970"/>
    </source>
</evidence>
<evidence type="ECO:0000312" key="5">
    <source>
        <dbReference type="EMBL" id="AAG51491.1"/>
    </source>
</evidence>
<evidence type="ECO:0007744" key="6">
    <source>
    </source>
</evidence>
<feature type="initiator methionine" description="Removed" evidence="6">
    <location>
        <position position="1"/>
    </location>
</feature>
<feature type="chain" id="PRO_0000194780" description="Nuclear transport factor 2B">
    <location>
        <begin position="2"/>
        <end position="126"/>
    </location>
</feature>
<feature type="domain" description="NTF2" evidence="1">
    <location>
        <begin position="9"/>
        <end position="123"/>
    </location>
</feature>
<feature type="modified residue" description="N-acetylserine" evidence="6">
    <location>
        <position position="2"/>
    </location>
</feature>
<comment type="function">
    <text evidence="2">Facilitates protein transport into the nucleus. Interacts with various nucleoporins and with Ran-GDP. Could be part of a multicomponent system of cytosolic factors that assemble at the pore complex during nuclear import.</text>
</comment>
<comment type="subunit">
    <text evidence="2">Interacts with RAN1.</text>
</comment>
<comment type="subcellular location">
    <subcellularLocation>
        <location evidence="2">Cytoplasm</location>
    </subcellularLocation>
    <subcellularLocation>
        <location evidence="2">Nucleus</location>
    </subcellularLocation>
    <subcellularLocation>
        <location evidence="2">Nucleus envelope</location>
    </subcellularLocation>
    <text evidence="2">Accumulates at the nuclear rim. Excluded from the nucleolus.</text>
</comment>
<comment type="alternative products">
    <event type="alternative splicing"/>
    <isoform>
        <id>Q9C7F5-1</id>
        <name>1</name>
        <sequence type="displayed"/>
    </isoform>
    <text>A number of isoforms are produced. According to EST sequences.</text>
</comment>
<comment type="tissue specificity">
    <text evidence="2">Expressed in roots, stems, leaves and flowers, and, at low levels, in siliques.</text>
</comment>